<feature type="chain" id="PRO_0000134020" description="Enolase">
    <location>
        <begin position="1"/>
        <end position="399"/>
    </location>
</feature>
<feature type="active site" description="Proton donor" evidence="1">
    <location>
        <position position="191"/>
    </location>
</feature>
<feature type="active site" description="Proton acceptor" evidence="1">
    <location>
        <position position="318"/>
    </location>
</feature>
<feature type="binding site" evidence="1">
    <location>
        <position position="149"/>
    </location>
    <ligand>
        <name>(2R)-2-phosphoglycerate</name>
        <dbReference type="ChEBI" id="CHEBI:58289"/>
    </ligand>
</feature>
<feature type="binding site" evidence="1">
    <location>
        <position position="227"/>
    </location>
    <ligand>
        <name>Mg(2+)</name>
        <dbReference type="ChEBI" id="CHEBI:18420"/>
    </ligand>
</feature>
<feature type="binding site" evidence="1">
    <location>
        <position position="268"/>
    </location>
    <ligand>
        <name>Mg(2+)</name>
        <dbReference type="ChEBI" id="CHEBI:18420"/>
    </ligand>
</feature>
<feature type="binding site" evidence="1">
    <location>
        <position position="293"/>
    </location>
    <ligand>
        <name>Mg(2+)</name>
        <dbReference type="ChEBI" id="CHEBI:18420"/>
    </ligand>
</feature>
<feature type="binding site" evidence="1">
    <location>
        <position position="318"/>
    </location>
    <ligand>
        <name>(2R)-2-phosphoglycerate</name>
        <dbReference type="ChEBI" id="CHEBI:58289"/>
    </ligand>
</feature>
<feature type="binding site" evidence="1">
    <location>
        <position position="347"/>
    </location>
    <ligand>
        <name>(2R)-2-phosphoglycerate</name>
        <dbReference type="ChEBI" id="CHEBI:58289"/>
    </ligand>
</feature>
<feature type="binding site" evidence="1">
    <location>
        <position position="348"/>
    </location>
    <ligand>
        <name>(2R)-2-phosphoglycerate</name>
        <dbReference type="ChEBI" id="CHEBI:58289"/>
    </ligand>
</feature>
<feature type="binding site" evidence="1">
    <location>
        <position position="369"/>
    </location>
    <ligand>
        <name>(2R)-2-phosphoglycerate</name>
        <dbReference type="ChEBI" id="CHEBI:58289"/>
    </ligand>
</feature>
<evidence type="ECO:0000255" key="1">
    <source>
        <dbReference type="HAMAP-Rule" id="MF_00318"/>
    </source>
</evidence>
<evidence type="ECO:0000305" key="2"/>
<proteinExistence type="inferred from homology"/>
<dbReference type="EC" id="4.2.1.11" evidence="1"/>
<dbReference type="EMBL" id="AE000782">
    <property type="protein sequence ID" value="AAB90112.1"/>
    <property type="status" value="ALT_INIT"/>
    <property type="molecule type" value="Genomic_DNA"/>
</dbReference>
<dbReference type="PIR" id="C69391">
    <property type="entry name" value="C69391"/>
</dbReference>
<dbReference type="RefSeq" id="WP_048064335.1">
    <property type="nucleotide sequence ID" value="NC_000917.1"/>
</dbReference>
<dbReference type="SMR" id="O29133"/>
<dbReference type="STRING" id="224325.AF_1132"/>
<dbReference type="PaxDb" id="224325-AF_1132"/>
<dbReference type="EnsemblBacteria" id="AAB90112">
    <property type="protein sequence ID" value="AAB90112"/>
    <property type="gene ID" value="AF_1132"/>
</dbReference>
<dbReference type="GeneID" id="24794738"/>
<dbReference type="KEGG" id="afu:AF_1132"/>
<dbReference type="eggNOG" id="arCOG01169">
    <property type="taxonomic scope" value="Archaea"/>
</dbReference>
<dbReference type="HOGENOM" id="CLU_031223_0_1_2"/>
<dbReference type="OrthoDB" id="8680at2157"/>
<dbReference type="PhylomeDB" id="O29133"/>
<dbReference type="UniPathway" id="UPA00109">
    <property type="reaction ID" value="UER00187"/>
</dbReference>
<dbReference type="Proteomes" id="UP000002199">
    <property type="component" value="Chromosome"/>
</dbReference>
<dbReference type="GO" id="GO:0009986">
    <property type="term" value="C:cell surface"/>
    <property type="evidence" value="ECO:0007669"/>
    <property type="project" value="UniProtKB-SubCell"/>
</dbReference>
<dbReference type="GO" id="GO:0005576">
    <property type="term" value="C:extracellular region"/>
    <property type="evidence" value="ECO:0007669"/>
    <property type="project" value="UniProtKB-SubCell"/>
</dbReference>
<dbReference type="GO" id="GO:0000015">
    <property type="term" value="C:phosphopyruvate hydratase complex"/>
    <property type="evidence" value="ECO:0007669"/>
    <property type="project" value="InterPro"/>
</dbReference>
<dbReference type="GO" id="GO:0000287">
    <property type="term" value="F:magnesium ion binding"/>
    <property type="evidence" value="ECO:0007669"/>
    <property type="project" value="UniProtKB-UniRule"/>
</dbReference>
<dbReference type="GO" id="GO:0004634">
    <property type="term" value="F:phosphopyruvate hydratase activity"/>
    <property type="evidence" value="ECO:0007669"/>
    <property type="project" value="UniProtKB-UniRule"/>
</dbReference>
<dbReference type="GO" id="GO:0006096">
    <property type="term" value="P:glycolytic process"/>
    <property type="evidence" value="ECO:0007669"/>
    <property type="project" value="UniProtKB-UniRule"/>
</dbReference>
<dbReference type="CDD" id="cd03313">
    <property type="entry name" value="enolase"/>
    <property type="match status" value="1"/>
</dbReference>
<dbReference type="Gene3D" id="3.20.20.120">
    <property type="entry name" value="Enolase-like C-terminal domain"/>
    <property type="match status" value="1"/>
</dbReference>
<dbReference type="Gene3D" id="3.30.390.10">
    <property type="entry name" value="Enolase-like, N-terminal domain"/>
    <property type="match status" value="1"/>
</dbReference>
<dbReference type="HAMAP" id="MF_00318">
    <property type="entry name" value="Enolase"/>
    <property type="match status" value="1"/>
</dbReference>
<dbReference type="InterPro" id="IPR000941">
    <property type="entry name" value="Enolase"/>
</dbReference>
<dbReference type="InterPro" id="IPR036849">
    <property type="entry name" value="Enolase-like_C_sf"/>
</dbReference>
<dbReference type="InterPro" id="IPR029017">
    <property type="entry name" value="Enolase-like_N"/>
</dbReference>
<dbReference type="InterPro" id="IPR020810">
    <property type="entry name" value="Enolase_C"/>
</dbReference>
<dbReference type="InterPro" id="IPR020809">
    <property type="entry name" value="Enolase_CS"/>
</dbReference>
<dbReference type="InterPro" id="IPR020811">
    <property type="entry name" value="Enolase_N"/>
</dbReference>
<dbReference type="NCBIfam" id="TIGR01060">
    <property type="entry name" value="eno"/>
    <property type="match status" value="1"/>
</dbReference>
<dbReference type="PANTHER" id="PTHR11902">
    <property type="entry name" value="ENOLASE"/>
    <property type="match status" value="1"/>
</dbReference>
<dbReference type="PANTHER" id="PTHR11902:SF1">
    <property type="entry name" value="ENOLASE"/>
    <property type="match status" value="1"/>
</dbReference>
<dbReference type="Pfam" id="PF00113">
    <property type="entry name" value="Enolase_C"/>
    <property type="match status" value="1"/>
</dbReference>
<dbReference type="Pfam" id="PF03952">
    <property type="entry name" value="Enolase_N"/>
    <property type="match status" value="1"/>
</dbReference>
<dbReference type="PIRSF" id="PIRSF001400">
    <property type="entry name" value="Enolase"/>
    <property type="match status" value="1"/>
</dbReference>
<dbReference type="PRINTS" id="PR00148">
    <property type="entry name" value="ENOLASE"/>
</dbReference>
<dbReference type="SFLD" id="SFLDF00002">
    <property type="entry name" value="enolase"/>
    <property type="match status" value="1"/>
</dbReference>
<dbReference type="SFLD" id="SFLDG00178">
    <property type="entry name" value="enolase"/>
    <property type="match status" value="1"/>
</dbReference>
<dbReference type="SMART" id="SM01192">
    <property type="entry name" value="Enolase_C"/>
    <property type="match status" value="1"/>
</dbReference>
<dbReference type="SMART" id="SM01193">
    <property type="entry name" value="Enolase_N"/>
    <property type="match status" value="1"/>
</dbReference>
<dbReference type="SUPFAM" id="SSF51604">
    <property type="entry name" value="Enolase C-terminal domain-like"/>
    <property type="match status" value="1"/>
</dbReference>
<dbReference type="SUPFAM" id="SSF54826">
    <property type="entry name" value="Enolase N-terminal domain-like"/>
    <property type="match status" value="1"/>
</dbReference>
<dbReference type="PROSITE" id="PS00164">
    <property type="entry name" value="ENOLASE"/>
    <property type="match status" value="1"/>
</dbReference>
<keyword id="KW-0963">Cytoplasm</keyword>
<keyword id="KW-0324">Glycolysis</keyword>
<keyword id="KW-0456">Lyase</keyword>
<keyword id="KW-0460">Magnesium</keyword>
<keyword id="KW-0479">Metal-binding</keyword>
<keyword id="KW-1185">Reference proteome</keyword>
<keyword id="KW-0964">Secreted</keyword>
<sequence>MIIEDVHYRVVFDSRGNETVECEVVAGEVVAKAMAPSGASTGSGEAVVVSPYRYEEIEEEVSKAIIGMSVFDQESVDEALRELDGTDNFSRIGGNFAITASLAVAKAAAEILGLPLYAYVGGVFAKELPYPLGNVIGGGRHAEGSTSIQEFLVIPVGAKTFFEAQRANAAVHKQLKKIFKERGIFAAKGDEGAWAAQISDEQAFEILSEAIQRVEDELGVKVRMGIDVAATELWDGERYVYSDRKLTTEEQIAYMAELADRYDLLYIEDPLHEKDFEGFAELTKQVKCMVCGDDIFVTNPEIIKKGIEVGAANTVLIKPNQNGTLSGTAKAVKIAKDNGYSVVVSHRSGETEDETLAHLAVAFNAKLIKTGVVGGERISKLNELIRIEELMDKPRMVMI</sequence>
<reference key="1">
    <citation type="journal article" date="1997" name="Nature">
        <title>The complete genome sequence of the hyperthermophilic, sulphate-reducing archaeon Archaeoglobus fulgidus.</title>
        <authorList>
            <person name="Klenk H.-P."/>
            <person name="Clayton R.A."/>
            <person name="Tomb J.-F."/>
            <person name="White O."/>
            <person name="Nelson K.E."/>
            <person name="Ketchum K.A."/>
            <person name="Dodson R.J."/>
            <person name="Gwinn M.L."/>
            <person name="Hickey E.K."/>
            <person name="Peterson J.D."/>
            <person name="Richardson D.L."/>
            <person name="Kerlavage A.R."/>
            <person name="Graham D.E."/>
            <person name="Kyrpides N.C."/>
            <person name="Fleischmann R.D."/>
            <person name="Quackenbush J."/>
            <person name="Lee N.H."/>
            <person name="Sutton G.G."/>
            <person name="Gill S.R."/>
            <person name="Kirkness E.F."/>
            <person name="Dougherty B.A."/>
            <person name="McKenney K."/>
            <person name="Adams M.D."/>
            <person name="Loftus B.J."/>
            <person name="Peterson S.N."/>
            <person name="Reich C.I."/>
            <person name="McNeil L.K."/>
            <person name="Badger J.H."/>
            <person name="Glodek A."/>
            <person name="Zhou L."/>
            <person name="Overbeek R."/>
            <person name="Gocayne J.D."/>
            <person name="Weidman J.F."/>
            <person name="McDonald L.A."/>
            <person name="Utterback T.R."/>
            <person name="Cotton M.D."/>
            <person name="Spriggs T."/>
            <person name="Artiach P."/>
            <person name="Kaine B.P."/>
            <person name="Sykes S.M."/>
            <person name="Sadow P.W."/>
            <person name="D'Andrea K.P."/>
            <person name="Bowman C."/>
            <person name="Fujii C."/>
            <person name="Garland S.A."/>
            <person name="Mason T.M."/>
            <person name="Olsen G.J."/>
            <person name="Fraser C.M."/>
            <person name="Smith H.O."/>
            <person name="Woese C.R."/>
            <person name="Venter J.C."/>
        </authorList>
    </citation>
    <scope>NUCLEOTIDE SEQUENCE [LARGE SCALE GENOMIC DNA]</scope>
    <source>
        <strain>ATCC 49558 / DSM 4304 / JCM 9628 / NBRC 100126 / VC-16</strain>
    </source>
</reference>
<gene>
    <name evidence="1" type="primary">eno</name>
    <name type="ordered locus">AF_1132</name>
</gene>
<name>ENO_ARCFU</name>
<accession>O29133</accession>
<comment type="function">
    <text evidence="1">Catalyzes the reversible conversion of 2-phosphoglycerate (2-PG) into phosphoenolpyruvate (PEP). It is essential for the degradation of carbohydrates via glycolysis.</text>
</comment>
<comment type="catalytic activity">
    <reaction evidence="1">
        <text>(2R)-2-phosphoglycerate = phosphoenolpyruvate + H2O</text>
        <dbReference type="Rhea" id="RHEA:10164"/>
        <dbReference type="ChEBI" id="CHEBI:15377"/>
        <dbReference type="ChEBI" id="CHEBI:58289"/>
        <dbReference type="ChEBI" id="CHEBI:58702"/>
        <dbReference type="EC" id="4.2.1.11"/>
    </reaction>
</comment>
<comment type="cofactor">
    <cofactor evidence="1">
        <name>Mg(2+)</name>
        <dbReference type="ChEBI" id="CHEBI:18420"/>
    </cofactor>
    <text evidence="1">Binds a second Mg(2+) ion via substrate during catalysis.</text>
</comment>
<comment type="pathway">
    <text evidence="1">Carbohydrate degradation; glycolysis; pyruvate from D-glyceraldehyde 3-phosphate: step 4/5.</text>
</comment>
<comment type="subcellular location">
    <subcellularLocation>
        <location evidence="1">Cytoplasm</location>
    </subcellularLocation>
    <subcellularLocation>
        <location evidence="1">Secreted</location>
    </subcellularLocation>
    <subcellularLocation>
        <location evidence="1">Cell surface</location>
    </subcellularLocation>
    <text evidence="1">Fractions of enolase are present in both the cytoplasm and on the cell surface.</text>
</comment>
<comment type="similarity">
    <text evidence="1">Belongs to the enolase family.</text>
</comment>
<comment type="sequence caution" evidence="2">
    <conflict type="erroneous initiation">
        <sequence resource="EMBL-CDS" id="AAB90112"/>
    </conflict>
    <text>Truncated N-terminus.</text>
</comment>
<organism>
    <name type="scientific">Archaeoglobus fulgidus (strain ATCC 49558 / DSM 4304 / JCM 9628 / NBRC 100126 / VC-16)</name>
    <dbReference type="NCBI Taxonomy" id="224325"/>
    <lineage>
        <taxon>Archaea</taxon>
        <taxon>Methanobacteriati</taxon>
        <taxon>Methanobacteriota</taxon>
        <taxon>Archaeoglobi</taxon>
        <taxon>Archaeoglobales</taxon>
        <taxon>Archaeoglobaceae</taxon>
        <taxon>Archaeoglobus</taxon>
    </lineage>
</organism>
<protein>
    <recommendedName>
        <fullName evidence="1">Enolase</fullName>
        <ecNumber evidence="1">4.2.1.11</ecNumber>
    </recommendedName>
    <alternativeName>
        <fullName evidence="1">2-phospho-D-glycerate hydro-lyase</fullName>
    </alternativeName>
    <alternativeName>
        <fullName evidence="1">2-phosphoglycerate dehydratase</fullName>
    </alternativeName>
</protein>